<keyword id="KW-0150">Chloroplast</keyword>
<keyword id="KW-0934">Plastid</keyword>
<keyword id="KW-1185">Reference proteome</keyword>
<keyword id="KW-0809">Transit peptide</keyword>
<proteinExistence type="evidence at protein level"/>
<gene>
    <name evidence="7 8" type="primary">SGR1</name>
    <name evidence="6" type="synonym">GF</name>
    <name type="ordered locus">Solyc08g080090</name>
</gene>
<protein>
    <recommendedName>
        <fullName evidence="9">Protein STAY-GREEN 1, chloroplastic</fullName>
        <shortName evidence="8">LeSGR1</shortName>
        <shortName evidence="7">SlSGR1</shortName>
    </recommendedName>
    <alternativeName>
        <fullName evidence="6">Protein GREEN FLESH</fullName>
    </alternativeName>
</protein>
<accession>Q4JFW8</accession>
<comment type="function">
    <text evidence="3 4 5">Required to trigger chlorophyll degradation during leaf senescence and fruit ripening (PubMed:18359841, PubMed:23406468, Ref.3). Binds directly PSY1 to regulate the accumulation of lycopene and beta-carotene in the maturing fruits (PubMed:23406468).</text>
</comment>
<comment type="subunit">
    <text evidence="4">Interacts with PSY1.</text>
</comment>
<comment type="subcellular location">
    <subcellularLocation>
        <location evidence="1">Plastid</location>
        <location evidence="1">Chloroplast</location>
    </subcellularLocation>
</comment>
<comment type="developmental stage">
    <text evidence="3 5">Expressed during fruit ripening, but not during fruit development (PubMed:18359841, Ref.3). Expressed during leaf senescence, but not during leaf development (Ref.3).</text>
</comment>
<comment type="induction">
    <text evidence="5">Induced by drougt stress in leaves and stems.</text>
</comment>
<comment type="miscellaneous">
    <text evidence="4 5">Plants silencing SGR1 exhibit a stay-green leaf phenotype during leaf senescence, and a red-brown fruit phenotype in mature fruit (PubMed:23406468, Ref.3). Plants silencing SGR1 exhibit altered development of fruit pericarp cells (PubMed:23406468).</text>
</comment>
<comment type="similarity">
    <text evidence="9">Belongs to the staygreen family.</text>
</comment>
<sequence>MGTLTTSLVVPSKLNNEQQSSIFIHKTRRKCKKNQSIVPVARLFGPAIFEASKLKVLFLGVDEEKHPGKLPRTYTLTHSDITSKLTLAISQTINNSQLQGWYNRLQRDEVVAEWKKVKGKMSLHVHCHISGGHFMLDLFARLRNYIFCKELPVVLKAFVHGDENLLRNYPELQEALVWVYFHSNIQEFNKVECWGPLRDATSPSSSSGGVGGVKSTSFTSNSNKKWELPKPCEEACACCFPPVSVMPWLSSNLDGVGEENGTIQQGLQEQQS</sequence>
<dbReference type="EMBL" id="EU414632">
    <property type="protein sequence ID" value="ACB56587.1"/>
    <property type="molecule type" value="mRNA"/>
</dbReference>
<dbReference type="EMBL" id="FJ647188">
    <property type="protein sequence ID" value="ACV60215.1"/>
    <property type="molecule type" value="Genomic_DNA"/>
</dbReference>
<dbReference type="EMBL" id="DQ100158">
    <property type="protein sequence ID" value="AAY98500.1"/>
    <property type="molecule type" value="mRNA"/>
</dbReference>
<dbReference type="RefSeq" id="NP_001234723.1">
    <property type="nucleotide sequence ID" value="NM_001247794.1"/>
</dbReference>
<dbReference type="SMR" id="Q4JFW8"/>
<dbReference type="FunCoup" id="Q4JFW8">
    <property type="interactions" value="163"/>
</dbReference>
<dbReference type="STRING" id="4081.Q4JFW8"/>
<dbReference type="PaxDb" id="4081-Solyc08g080090.2.1"/>
<dbReference type="GeneID" id="778212"/>
<dbReference type="KEGG" id="sly:778212"/>
<dbReference type="eggNOG" id="ENOG502QV01">
    <property type="taxonomic scope" value="Eukaryota"/>
</dbReference>
<dbReference type="HOGENOM" id="CLU_073517_0_0_1"/>
<dbReference type="InParanoid" id="Q4JFW8"/>
<dbReference type="OrthoDB" id="2012322at2759"/>
<dbReference type="PhylomeDB" id="Q4JFW8"/>
<dbReference type="Proteomes" id="UP000004994">
    <property type="component" value="Unplaced"/>
</dbReference>
<dbReference type="GO" id="GO:0009507">
    <property type="term" value="C:chloroplast"/>
    <property type="evidence" value="ECO:0007669"/>
    <property type="project" value="UniProtKB-SubCell"/>
</dbReference>
<dbReference type="GO" id="GO:0015996">
    <property type="term" value="P:chlorophyll catabolic process"/>
    <property type="evidence" value="ECO:0000315"/>
    <property type="project" value="UniProtKB"/>
</dbReference>
<dbReference type="InterPro" id="IPR024438">
    <property type="entry name" value="Staygreen"/>
</dbReference>
<dbReference type="PANTHER" id="PTHR31750:SF4">
    <property type="entry name" value="LP06106P"/>
    <property type="match status" value="1"/>
</dbReference>
<dbReference type="PANTHER" id="PTHR31750">
    <property type="entry name" value="PROTEIN STAY-GREEN 1, CHLOROPLASTIC-RELATED"/>
    <property type="match status" value="1"/>
</dbReference>
<dbReference type="Pfam" id="PF12638">
    <property type="entry name" value="Staygreen"/>
    <property type="match status" value="1"/>
</dbReference>
<reference key="1">
    <citation type="journal article" date="2008" name="Plant Physiol.">
        <title>Amino acid substitutions in homologs of the STAY-GREEN protein are responsible for the green-flesh and chlorophyll retainer mutations of tomato and pepper.</title>
        <authorList>
            <person name="Barry C.S."/>
            <person name="Mc Quinn R.P."/>
            <person name="Chung M.Y."/>
            <person name="Besuden A."/>
            <person name="Giovannoni J.J."/>
        </authorList>
    </citation>
    <scope>NUCLEOTIDE SEQUENCE [MRNA]</scope>
    <scope>FUNCTION</scope>
    <scope>DEVELOPMENTAL STAGE</scope>
    <scope>MUTAGENESIS OF ARG-143</scope>
    <source>
        <strain>cv. Ailsa Craig</strain>
    </source>
</reference>
<reference key="2">
    <citation type="journal article" date="2009" name="Mol. Breed.">
        <title>A survey of cultivated heirloom tomato varieties identifies four new mutant alleles at the green-flesh locus.</title>
        <authorList>
            <person name="Barry C.S."/>
            <person name="Pandey P."/>
        </authorList>
        <dbReference type="AGRICOLA" id="IND44262997"/>
    </citation>
    <scope>NUCLEOTIDE SEQUENCE [GENOMIC DNA]</scope>
    <source>
        <strain>cv. Ailsa Craig</strain>
    </source>
</reference>
<reference key="3">
    <citation type="journal article" date="2011" name="Biol. Plant.">
        <title>Silencing of the LeSGR1 gene in tomato inhibits chlorophyll degradation and exhibits a stay-green phenotype.</title>
        <authorList>
            <person name="Hu Z.L."/>
            <person name="Deng L."/>
            <person name="Yan B."/>
            <person name="Pan Y."/>
            <person name="Luo M."/>
            <person name="Chen X.Q."/>
            <person name="Hu T.Z."/>
            <person name="Chen G.P."/>
        </authorList>
    </citation>
    <scope>NUCLEOTIDE SEQUENCE [MRNA]</scope>
    <scope>FUNCTION</scope>
    <scope>DEVELOPMENTAL STAGE</scope>
    <scope>INDUCTION BY DROUGHT STRESS</scope>
    <source>
        <strain>cv. Ailsa Craig</strain>
        <tissue>Pericarp</tissue>
    </source>
</reference>
<reference key="4">
    <citation type="journal article" date="2012" name="Nature">
        <title>The tomato genome sequence provides insights into fleshy fruit evolution.</title>
        <authorList>
            <consortium name="Tomato Genome Consortium"/>
        </authorList>
    </citation>
    <scope>NUCLEOTIDE SEQUENCE [LARGE SCALE GENOMIC DNA]</scope>
    <source>
        <strain>cv. Heinz 1706</strain>
    </source>
</reference>
<reference key="5">
    <citation type="journal article" date="2013" name="New Phytol.">
        <title>A STAY-GREEN protein SlSGR1 regulates lycopene and beta-carotene accumulation by interacting directly with SlPSY1 during ripening processes in tomato.</title>
        <authorList>
            <person name="Luo Z."/>
            <person name="Zhang J."/>
            <person name="Li J."/>
            <person name="Yang C."/>
            <person name="Wang T."/>
            <person name="Ouyang B."/>
            <person name="Li H."/>
            <person name="Giovannoni J."/>
            <person name="Ye Z."/>
        </authorList>
    </citation>
    <scope>FUNCTION</scope>
    <scope>INTERACTION WITH PSY1</scope>
</reference>
<feature type="transit peptide" description="Chloroplast" evidence="1">
    <location>
        <begin position="1"/>
        <end position="50"/>
    </location>
</feature>
<feature type="chain" id="PRO_0000445974" description="Protein STAY-GREEN 1, chloroplastic">
    <location>
        <begin position="51"/>
        <end position="272"/>
    </location>
</feature>
<feature type="region of interest" description="Disordered" evidence="2">
    <location>
        <begin position="201"/>
        <end position="222"/>
    </location>
</feature>
<feature type="mutagenesis site" description="In gf; stay-green leaf phenotype during leaf dark-induced senescence, and red-brown color of ripe fruits." evidence="3">
    <original>R</original>
    <variation>S</variation>
    <location>
        <position position="143"/>
    </location>
</feature>
<organism>
    <name type="scientific">Solanum lycopersicum</name>
    <name type="common">Tomato</name>
    <name type="synonym">Lycopersicon esculentum</name>
    <dbReference type="NCBI Taxonomy" id="4081"/>
    <lineage>
        <taxon>Eukaryota</taxon>
        <taxon>Viridiplantae</taxon>
        <taxon>Streptophyta</taxon>
        <taxon>Embryophyta</taxon>
        <taxon>Tracheophyta</taxon>
        <taxon>Spermatophyta</taxon>
        <taxon>Magnoliopsida</taxon>
        <taxon>eudicotyledons</taxon>
        <taxon>Gunneridae</taxon>
        <taxon>Pentapetalae</taxon>
        <taxon>asterids</taxon>
        <taxon>lamiids</taxon>
        <taxon>Solanales</taxon>
        <taxon>Solanaceae</taxon>
        <taxon>Solanoideae</taxon>
        <taxon>Solaneae</taxon>
        <taxon>Solanum</taxon>
        <taxon>Solanum subgen. Lycopersicon</taxon>
    </lineage>
</organism>
<evidence type="ECO:0000255" key="1"/>
<evidence type="ECO:0000256" key="2">
    <source>
        <dbReference type="SAM" id="MobiDB-lite"/>
    </source>
</evidence>
<evidence type="ECO:0000269" key="3">
    <source>
    </source>
</evidence>
<evidence type="ECO:0000269" key="4">
    <source>
    </source>
</evidence>
<evidence type="ECO:0000269" key="5">
    <source ref="3"/>
</evidence>
<evidence type="ECO:0000303" key="6">
    <source>
    </source>
</evidence>
<evidence type="ECO:0000303" key="7">
    <source>
    </source>
</evidence>
<evidence type="ECO:0000303" key="8">
    <source ref="3"/>
</evidence>
<evidence type="ECO:0000305" key="9"/>
<name>SGR1_SOLLC</name>